<sequence>VDNEAIYDICRRNLGIERPGYTNLNRLIAHVVSSITASLRFDGSLNVDLNEFQTNLVPYPRIHFPLVTYAPVISAAKAVHEANSVSEITNACFEPNNQMVKCDPRNGKYMATCLLYRGDVVTKDVNAAVAAVRTKRTIQFVDWCPTGFKLGVCYQPPQHVPHGDLAKVDRAVCMLSNTTSIAEAWPRLDHKFDLMYSKRAFVHWYVGEGMEE</sequence>
<protein>
    <recommendedName>
        <fullName>Tubulin alpha chain</fullName>
        <ecNumber evidence="1">3.6.5.-</ecNumber>
    </recommendedName>
</protein>
<feature type="chain" id="PRO_0000048220" description="Tubulin alpha chain">
    <location>
        <begin position="1" status="less than"/>
        <end position="212" status="greater than"/>
    </location>
</feature>
<feature type="active site" evidence="1">
    <location>
        <position position="51"/>
    </location>
</feature>
<feature type="binding site" evidence="1">
    <location>
        <position position="3"/>
    </location>
    <ligand>
        <name>GTP</name>
        <dbReference type="ChEBI" id="CHEBI:37565"/>
    </ligand>
</feature>
<feature type="binding site" evidence="1">
    <location>
        <position position="25"/>
    </location>
    <ligand>
        <name>GTP</name>
        <dbReference type="ChEBI" id="CHEBI:37565"/>
    </ligand>
</feature>
<feature type="non-terminal residue">
    <location>
        <position position="1"/>
    </location>
</feature>
<feature type="non-terminal residue">
    <location>
        <position position="212"/>
    </location>
</feature>
<comment type="function">
    <text>Tubulin is the major constituent of microtubules, a cylinder consisting of laterally associated linear protofilaments composed of alpha- and beta-tubulin heterodimers. Microtubules grow by the addition of GTP-tubulin dimers to the microtubule end, where a stabilizing cap forms. Below the cap, tubulin dimers are in GDP-bound state, owing to GTPase activity of alpha-tubulin.</text>
</comment>
<comment type="catalytic activity">
    <reaction evidence="1">
        <text>GTP + H2O = GDP + phosphate + H(+)</text>
        <dbReference type="Rhea" id="RHEA:19669"/>
        <dbReference type="ChEBI" id="CHEBI:15377"/>
        <dbReference type="ChEBI" id="CHEBI:15378"/>
        <dbReference type="ChEBI" id="CHEBI:37565"/>
        <dbReference type="ChEBI" id="CHEBI:43474"/>
        <dbReference type="ChEBI" id="CHEBI:58189"/>
    </reaction>
    <physiologicalReaction direction="left-to-right" evidence="1">
        <dbReference type="Rhea" id="RHEA:19670"/>
    </physiologicalReaction>
</comment>
<comment type="cofactor">
    <cofactor evidence="1">
        <name>Mg(2+)</name>
        <dbReference type="ChEBI" id="CHEBI:18420"/>
    </cofactor>
</comment>
<comment type="subunit">
    <text>Dimer of alpha and beta chains. A typical microtubule is a hollow water-filled tube with an outer diameter of 25 nm and an inner diameter of 15 nM. Alpha-beta heterodimers associate head-to-tail to form protofilaments running lengthwise along the microtubule wall with the beta-tubulin subunit facing the microtubule plus end conferring a structural polarity. Microtubules usually have 13 protofilaments but different protofilament numbers can be found in some organisms and specialized cells.</text>
</comment>
<comment type="subcellular location">
    <subcellularLocation>
        <location>Cytoplasm</location>
        <location>Cytoskeleton</location>
    </subcellularLocation>
</comment>
<comment type="similarity">
    <text evidence="2">Belongs to the tubulin family.</text>
</comment>
<organism>
    <name type="scientific">Pneumocystis carinii</name>
    <dbReference type="NCBI Taxonomy" id="4754"/>
    <lineage>
        <taxon>Eukaryota</taxon>
        <taxon>Fungi</taxon>
        <taxon>Dikarya</taxon>
        <taxon>Ascomycota</taxon>
        <taxon>Taphrinomycotina</taxon>
        <taxon>Pneumocystomycetes</taxon>
        <taxon>Pneumocystaceae</taxon>
        <taxon>Pneumocystis</taxon>
    </lineage>
</organism>
<gene>
    <name type="primary">TUB-A</name>
</gene>
<accession>Q07972</accession>
<proteinExistence type="inferred from homology"/>
<evidence type="ECO:0000250" key="1">
    <source>
        <dbReference type="UniProtKB" id="P68363"/>
    </source>
</evidence>
<evidence type="ECO:0000305" key="2"/>
<reference key="1">
    <citation type="journal article" date="1993" name="J. Eukaryot. Microbiol.">
        <title>Molecular genetic distinction of Pneumocystis carinii from rats and humans.</title>
        <authorList>
            <person name="Stringer J.R."/>
            <person name="Stringer S.L."/>
            <person name="Zhang J."/>
            <person name="Baughman R."/>
            <person name="Smulian A.G."/>
            <person name="Cushion M.T."/>
        </authorList>
    </citation>
    <scope>NUCLEOTIDE SEQUENCE [GENOMIC DNA]</scope>
</reference>
<dbReference type="EC" id="3.6.5.-" evidence="1"/>
<dbReference type="EMBL" id="L19616">
    <property type="protein sequence ID" value="AAA16925.1"/>
    <property type="molecule type" value="Unassigned_DNA"/>
</dbReference>
<dbReference type="SMR" id="Q07972"/>
<dbReference type="VEuPathDB" id="FungiDB:T552_02623"/>
<dbReference type="GO" id="GO:0005737">
    <property type="term" value="C:cytoplasm"/>
    <property type="evidence" value="ECO:0007669"/>
    <property type="project" value="UniProtKB-KW"/>
</dbReference>
<dbReference type="GO" id="GO:0005874">
    <property type="term" value="C:microtubule"/>
    <property type="evidence" value="ECO:0007669"/>
    <property type="project" value="UniProtKB-KW"/>
</dbReference>
<dbReference type="GO" id="GO:0005525">
    <property type="term" value="F:GTP binding"/>
    <property type="evidence" value="ECO:0007669"/>
    <property type="project" value="UniProtKB-KW"/>
</dbReference>
<dbReference type="GO" id="GO:0016787">
    <property type="term" value="F:hydrolase activity"/>
    <property type="evidence" value="ECO:0007669"/>
    <property type="project" value="UniProtKB-KW"/>
</dbReference>
<dbReference type="GO" id="GO:0005200">
    <property type="term" value="F:structural constituent of cytoskeleton"/>
    <property type="evidence" value="ECO:0007669"/>
    <property type="project" value="InterPro"/>
</dbReference>
<dbReference type="GO" id="GO:0007017">
    <property type="term" value="P:microtubule-based process"/>
    <property type="evidence" value="ECO:0007669"/>
    <property type="project" value="InterPro"/>
</dbReference>
<dbReference type="FunFam" id="3.30.1330.20:FF:000001">
    <property type="entry name" value="Tubulin alpha chain"/>
    <property type="match status" value="1"/>
</dbReference>
<dbReference type="Gene3D" id="1.10.287.600">
    <property type="entry name" value="Helix hairpin bin"/>
    <property type="match status" value="1"/>
</dbReference>
<dbReference type="Gene3D" id="3.30.1330.20">
    <property type="entry name" value="Tubulin/FtsZ, C-terminal domain"/>
    <property type="match status" value="1"/>
</dbReference>
<dbReference type="Gene3D" id="3.40.50.1440">
    <property type="entry name" value="Tubulin/FtsZ, GTPase domain"/>
    <property type="match status" value="1"/>
</dbReference>
<dbReference type="InterPro" id="IPR002452">
    <property type="entry name" value="Alpha_tubulin"/>
</dbReference>
<dbReference type="InterPro" id="IPR008280">
    <property type="entry name" value="Tub_FtsZ_C"/>
</dbReference>
<dbReference type="InterPro" id="IPR000217">
    <property type="entry name" value="Tubulin"/>
</dbReference>
<dbReference type="InterPro" id="IPR037103">
    <property type="entry name" value="Tubulin/FtsZ-like_C"/>
</dbReference>
<dbReference type="InterPro" id="IPR018316">
    <property type="entry name" value="Tubulin/FtsZ_2-layer-sand-dom"/>
</dbReference>
<dbReference type="InterPro" id="IPR036525">
    <property type="entry name" value="Tubulin/FtsZ_GTPase_sf"/>
</dbReference>
<dbReference type="InterPro" id="IPR023123">
    <property type="entry name" value="Tubulin_C"/>
</dbReference>
<dbReference type="PANTHER" id="PTHR11588">
    <property type="entry name" value="TUBULIN"/>
    <property type="match status" value="1"/>
</dbReference>
<dbReference type="Pfam" id="PF03953">
    <property type="entry name" value="Tubulin_C"/>
    <property type="match status" value="1"/>
</dbReference>
<dbReference type="PRINTS" id="PR01162">
    <property type="entry name" value="ALPHATUBULIN"/>
</dbReference>
<dbReference type="SMART" id="SM00865">
    <property type="entry name" value="Tubulin_C"/>
    <property type="match status" value="1"/>
</dbReference>
<dbReference type="SUPFAM" id="SSF55307">
    <property type="entry name" value="Tubulin C-terminal domain-like"/>
    <property type="match status" value="1"/>
</dbReference>
<dbReference type="SUPFAM" id="SSF52490">
    <property type="entry name" value="Tubulin nucleotide-binding domain-like"/>
    <property type="match status" value="1"/>
</dbReference>
<name>TBAA_PNECA</name>
<keyword id="KW-0963">Cytoplasm</keyword>
<keyword id="KW-0206">Cytoskeleton</keyword>
<keyword id="KW-0342">GTP-binding</keyword>
<keyword id="KW-0378">Hydrolase</keyword>
<keyword id="KW-0493">Microtubule</keyword>
<keyword id="KW-0547">Nucleotide-binding</keyword>